<comment type="function">
    <text evidence="1">Participates in chromosomal partition during cell division. May act via the formation of a condensin-like complex containing Smc and ScpA that pull DNA away from mid-cell into both cell halves.</text>
</comment>
<comment type="subunit">
    <text evidence="1">Homodimer. Homodimerization may be required to stabilize the binding of ScpA to the Smc head domains. Component of a cohesin-like complex composed of ScpA, ScpB and the Smc homodimer, in which ScpA and ScpB bind to the head domain of Smc. The presence of the three proteins is required for the association of the complex with DNA.</text>
</comment>
<comment type="subcellular location">
    <subcellularLocation>
        <location evidence="1">Cytoplasm</location>
    </subcellularLocation>
    <text evidence="1">Associated with two foci at the outer edges of the nucleoid region in young cells, and at four foci within both cell halves in older cells.</text>
</comment>
<comment type="similarity">
    <text evidence="1">Belongs to the ScpB family.</text>
</comment>
<dbReference type="EMBL" id="CP000920">
    <property type="protein sequence ID" value="ACO20208.1"/>
    <property type="molecule type" value="Genomic_DNA"/>
</dbReference>
<dbReference type="RefSeq" id="WP_000105310.1">
    <property type="nucleotide sequence ID" value="NC_012467.1"/>
</dbReference>
<dbReference type="PDB" id="4I98">
    <property type="method" value="X-ray"/>
    <property type="resolution" value="2.80 A"/>
    <property type="chains" value="B/C=1-183"/>
</dbReference>
<dbReference type="PDBsum" id="4I98"/>
<dbReference type="SMR" id="C1CMI5"/>
<dbReference type="GeneID" id="45219111"/>
<dbReference type="KEGG" id="spp:SPP_1875"/>
<dbReference type="HOGENOM" id="CLU_045647_5_3_9"/>
<dbReference type="EvolutionaryTrace" id="C1CMI5"/>
<dbReference type="GO" id="GO:0005737">
    <property type="term" value="C:cytoplasm"/>
    <property type="evidence" value="ECO:0007669"/>
    <property type="project" value="UniProtKB-SubCell"/>
</dbReference>
<dbReference type="GO" id="GO:0051301">
    <property type="term" value="P:cell division"/>
    <property type="evidence" value="ECO:0007669"/>
    <property type="project" value="UniProtKB-KW"/>
</dbReference>
<dbReference type="GO" id="GO:0051304">
    <property type="term" value="P:chromosome separation"/>
    <property type="evidence" value="ECO:0007669"/>
    <property type="project" value="InterPro"/>
</dbReference>
<dbReference type="GO" id="GO:0006260">
    <property type="term" value="P:DNA replication"/>
    <property type="evidence" value="ECO:0007669"/>
    <property type="project" value="UniProtKB-UniRule"/>
</dbReference>
<dbReference type="FunFam" id="1.10.10.10:FF:000507">
    <property type="entry name" value="Segregation and condensation protein B"/>
    <property type="match status" value="1"/>
</dbReference>
<dbReference type="FunFam" id="1.10.10.10:FF:000508">
    <property type="entry name" value="Segregation and condensation protein B"/>
    <property type="match status" value="1"/>
</dbReference>
<dbReference type="Gene3D" id="1.10.10.10">
    <property type="entry name" value="Winged helix-like DNA-binding domain superfamily/Winged helix DNA-binding domain"/>
    <property type="match status" value="2"/>
</dbReference>
<dbReference type="HAMAP" id="MF_01804">
    <property type="entry name" value="ScpB"/>
    <property type="match status" value="1"/>
</dbReference>
<dbReference type="InterPro" id="IPR005234">
    <property type="entry name" value="ScpB_csome_segregation"/>
</dbReference>
<dbReference type="InterPro" id="IPR036388">
    <property type="entry name" value="WH-like_DNA-bd_sf"/>
</dbReference>
<dbReference type="InterPro" id="IPR036390">
    <property type="entry name" value="WH_DNA-bd_sf"/>
</dbReference>
<dbReference type="NCBIfam" id="TIGR00281">
    <property type="entry name" value="SMC-Scp complex subunit ScpB"/>
    <property type="match status" value="1"/>
</dbReference>
<dbReference type="PANTHER" id="PTHR34298">
    <property type="entry name" value="SEGREGATION AND CONDENSATION PROTEIN B"/>
    <property type="match status" value="1"/>
</dbReference>
<dbReference type="PANTHER" id="PTHR34298:SF2">
    <property type="entry name" value="SEGREGATION AND CONDENSATION PROTEIN B"/>
    <property type="match status" value="1"/>
</dbReference>
<dbReference type="Pfam" id="PF04079">
    <property type="entry name" value="SMC_ScpB"/>
    <property type="match status" value="1"/>
</dbReference>
<dbReference type="PIRSF" id="PIRSF019345">
    <property type="entry name" value="ScpB"/>
    <property type="match status" value="1"/>
</dbReference>
<dbReference type="SUPFAM" id="SSF46785">
    <property type="entry name" value="Winged helix' DNA-binding domain"/>
    <property type="match status" value="2"/>
</dbReference>
<proteinExistence type="evidence at protein level"/>
<keyword id="KW-0002">3D-structure</keyword>
<keyword id="KW-0131">Cell cycle</keyword>
<keyword id="KW-0132">Cell division</keyword>
<keyword id="KW-0159">Chromosome partition</keyword>
<keyword id="KW-0963">Cytoplasm</keyword>
<reference key="1">
    <citation type="journal article" date="2010" name="Genome Biol.">
        <title>Structure and dynamics of the pan-genome of Streptococcus pneumoniae and closely related species.</title>
        <authorList>
            <person name="Donati C."/>
            <person name="Hiller N.L."/>
            <person name="Tettelin H."/>
            <person name="Muzzi A."/>
            <person name="Croucher N.J."/>
            <person name="Angiuoli S.V."/>
            <person name="Oggioni M."/>
            <person name="Dunning Hotopp J.C."/>
            <person name="Hu F.Z."/>
            <person name="Riley D.R."/>
            <person name="Covacci A."/>
            <person name="Mitchell T.J."/>
            <person name="Bentley S.D."/>
            <person name="Kilian M."/>
            <person name="Ehrlich G.D."/>
            <person name="Rappuoli R."/>
            <person name="Moxon E.R."/>
            <person name="Masignani V."/>
        </authorList>
    </citation>
    <scope>NUCLEOTIDE SEQUENCE [LARGE SCALE GENOMIC DNA]</scope>
    <source>
        <strain>P1031</strain>
    </source>
</reference>
<feature type="chain" id="PRO_1000187546" description="Segregation and condensation protein B">
    <location>
        <begin position="1"/>
        <end position="189"/>
    </location>
</feature>
<feature type="helix" evidence="2">
    <location>
        <begin position="3"/>
        <end position="13"/>
    </location>
</feature>
<feature type="turn" evidence="2">
    <location>
        <begin position="14"/>
        <end position="17"/>
    </location>
</feature>
<feature type="helix" evidence="2">
    <location>
        <begin position="21"/>
        <end position="28"/>
    </location>
</feature>
<feature type="helix" evidence="2">
    <location>
        <begin position="32"/>
        <end position="48"/>
    </location>
</feature>
<feature type="strand" evidence="2">
    <location>
        <begin position="54"/>
        <end position="59"/>
    </location>
</feature>
<feature type="strand" evidence="2">
    <location>
        <begin position="62"/>
        <end position="67"/>
    </location>
</feature>
<feature type="helix" evidence="2">
    <location>
        <begin position="69"/>
        <end position="71"/>
    </location>
</feature>
<feature type="helix" evidence="2">
    <location>
        <begin position="72"/>
        <end position="78"/>
    </location>
</feature>
<feature type="helix" evidence="2">
    <location>
        <begin position="83"/>
        <end position="85"/>
    </location>
</feature>
<feature type="helix" evidence="2">
    <location>
        <begin position="89"/>
        <end position="101"/>
    </location>
</feature>
<feature type="strand" evidence="2">
    <location>
        <begin position="103"/>
        <end position="105"/>
    </location>
</feature>
<feature type="helix" evidence="2">
    <location>
        <begin position="106"/>
        <end position="113"/>
    </location>
</feature>
<feature type="helix" evidence="2">
    <location>
        <begin position="118"/>
        <end position="126"/>
    </location>
</feature>
<feature type="strand" evidence="2">
    <location>
        <begin position="129"/>
        <end position="135"/>
    </location>
</feature>
<feature type="strand" evidence="2">
    <location>
        <begin position="143"/>
        <end position="147"/>
    </location>
</feature>
<feature type="helix" evidence="2">
    <location>
        <begin position="149"/>
        <end position="155"/>
    </location>
</feature>
<feature type="helix" evidence="2">
    <location>
        <begin position="160"/>
        <end position="162"/>
    </location>
</feature>
<name>SCPB_STRZP</name>
<protein>
    <recommendedName>
        <fullName evidence="1">Segregation and condensation protein B</fullName>
    </recommendedName>
</protein>
<accession>C1CMI5</accession>
<organism>
    <name type="scientific">Streptococcus pneumoniae (strain P1031)</name>
    <dbReference type="NCBI Taxonomy" id="488223"/>
    <lineage>
        <taxon>Bacteria</taxon>
        <taxon>Bacillati</taxon>
        <taxon>Bacillota</taxon>
        <taxon>Bacilli</taxon>
        <taxon>Lactobacillales</taxon>
        <taxon>Streptococcaceae</taxon>
        <taxon>Streptococcus</taxon>
    </lineage>
</organism>
<gene>
    <name evidence="1" type="primary">scpB</name>
    <name type="ordered locus">SPP_1875</name>
</gene>
<sequence>MSTLAKIEALLFVAGEDGIRVRQLAELLSLPPTGIQQSLGKLAQKYEKDPDSSLALIETSGAYRLVTKPQFAEILKEYSKAPINQSLSRAALETLSIIAYKQPITRIEIDAIRGVNSSGALAKLQAFDLIKEDGKKEVLGRPNLYVTTDYFLDYMGINHLEELPVIDELEIQAQESQLFGERIEEDENQ</sequence>
<evidence type="ECO:0000255" key="1">
    <source>
        <dbReference type="HAMAP-Rule" id="MF_01804"/>
    </source>
</evidence>
<evidence type="ECO:0007829" key="2">
    <source>
        <dbReference type="PDB" id="4I98"/>
    </source>
</evidence>